<keyword id="KW-0333">Golgi apparatus</keyword>
<keyword id="KW-0378">Hydrolase</keyword>
<keyword id="KW-1185">Reference proteome</keyword>
<name>CPD1_NEUCR</name>
<reference key="1">
    <citation type="journal article" date="2003" name="Nature">
        <title>The genome sequence of the filamentous fungus Neurospora crassa.</title>
        <authorList>
            <person name="Galagan J.E."/>
            <person name="Calvo S.E."/>
            <person name="Borkovich K.A."/>
            <person name="Selker E.U."/>
            <person name="Read N.D."/>
            <person name="Jaffe D.B."/>
            <person name="FitzHugh W."/>
            <person name="Ma L.-J."/>
            <person name="Smirnov S."/>
            <person name="Purcell S."/>
            <person name="Rehman B."/>
            <person name="Elkins T."/>
            <person name="Engels R."/>
            <person name="Wang S."/>
            <person name="Nielsen C.B."/>
            <person name="Butler J."/>
            <person name="Endrizzi M."/>
            <person name="Qui D."/>
            <person name="Ianakiev P."/>
            <person name="Bell-Pedersen D."/>
            <person name="Nelson M.A."/>
            <person name="Werner-Washburne M."/>
            <person name="Selitrennikoff C.P."/>
            <person name="Kinsey J.A."/>
            <person name="Braun E.L."/>
            <person name="Zelter A."/>
            <person name="Schulte U."/>
            <person name="Kothe G.O."/>
            <person name="Jedd G."/>
            <person name="Mewes H.-W."/>
            <person name="Staben C."/>
            <person name="Marcotte E."/>
            <person name="Greenberg D."/>
            <person name="Roy A."/>
            <person name="Foley K."/>
            <person name="Naylor J."/>
            <person name="Stange-Thomann N."/>
            <person name="Barrett R."/>
            <person name="Gnerre S."/>
            <person name="Kamal M."/>
            <person name="Kamvysselis M."/>
            <person name="Mauceli E.W."/>
            <person name="Bielke C."/>
            <person name="Rudd S."/>
            <person name="Frishman D."/>
            <person name="Krystofova S."/>
            <person name="Rasmussen C."/>
            <person name="Metzenberg R.L."/>
            <person name="Perkins D.D."/>
            <person name="Kroken S."/>
            <person name="Cogoni C."/>
            <person name="Macino G."/>
            <person name="Catcheside D.E.A."/>
            <person name="Li W."/>
            <person name="Pratt R.J."/>
            <person name="Osmani S.A."/>
            <person name="DeSouza C.P.C."/>
            <person name="Glass N.L."/>
            <person name="Orbach M.J."/>
            <person name="Berglund J.A."/>
            <person name="Voelker R."/>
            <person name="Yarden O."/>
            <person name="Plamann M."/>
            <person name="Seiler S."/>
            <person name="Dunlap J.C."/>
            <person name="Radford A."/>
            <person name="Aramayo R."/>
            <person name="Natvig D.O."/>
            <person name="Alex L.A."/>
            <person name="Mannhaupt G."/>
            <person name="Ebbole D.J."/>
            <person name="Freitag M."/>
            <person name="Paulsen I."/>
            <person name="Sachs M.S."/>
            <person name="Lander E.S."/>
            <person name="Nusbaum C."/>
            <person name="Birren B.W."/>
        </authorList>
    </citation>
    <scope>NUCLEOTIDE SEQUENCE [LARGE SCALE GENOMIC DNA]</scope>
    <source>
        <strain>ATCC 24698 / 74-OR23-1A / CBS 708.71 / DSM 1257 / FGSC 987</strain>
    </source>
</reference>
<sequence>MPGSSLWLIPPPSHPLYPILSFLISQHLPSDFPSEAGAADARLIPEFFAPHMTLSSGISPDLYGDDPQRWLDSIPWPSADEVQVRFEGISSQDTYYRRCYARVKLDEGIKKIAGLARARGVNGEDDAKGAKTQEWLEWWRKEFGPHVSLMYGDVPISDDRLKEVAKVVEEAGVKLAEPEGNVEGNGWNGGVVWLVPTDRDIRDWKPIAKRVL</sequence>
<proteinExistence type="inferred from homology"/>
<gene>
    <name type="primary">cpd-7</name>
    <name type="synonym">cpd1</name>
    <name type="ORF">NCU05539</name>
</gene>
<feature type="chain" id="PRO_0000280679" description="2',3'-cyclic-nucleotide 3'-phosphodiesterase">
    <location>
        <begin position="1"/>
        <end position="212"/>
    </location>
</feature>
<feature type="active site" description="Proton donor/acceptor" evidence="1">
    <location>
        <position position="51"/>
    </location>
</feature>
<feature type="active site" description="Proton donor/acceptor" evidence="1">
    <location>
        <position position="146"/>
    </location>
</feature>
<feature type="binding site" evidence="1">
    <location>
        <position position="53"/>
    </location>
    <ligand>
        <name>substrate</name>
    </ligand>
</feature>
<feature type="binding site" evidence="1">
    <location>
        <position position="148"/>
    </location>
    <ligand>
        <name>substrate</name>
    </ligand>
</feature>
<feature type="binding site" evidence="1">
    <location>
        <position position="151"/>
    </location>
    <ligand>
        <name>substrate</name>
    </ligand>
</feature>
<protein>
    <recommendedName>
        <fullName>2',3'-cyclic-nucleotide 3'-phosphodiesterase</fullName>
        <shortName>CPDase</shortName>
        <ecNumber>3.1.4.37</ecNumber>
    </recommendedName>
</protein>
<comment type="function">
    <text evidence="1">Involved in the metabolism of ADP-ribose 1',2'-cyclic phosphate which is produced as a consequence of tRNA splicing.</text>
</comment>
<comment type="catalytic activity">
    <reaction>
        <text>a nucleoside 2',3'-cyclic phosphate + H2O = a nucleoside 2'-phosphate + H(+)</text>
        <dbReference type="Rhea" id="RHEA:14489"/>
        <dbReference type="ChEBI" id="CHEBI:15377"/>
        <dbReference type="ChEBI" id="CHEBI:15378"/>
        <dbReference type="ChEBI" id="CHEBI:66954"/>
        <dbReference type="ChEBI" id="CHEBI:78552"/>
        <dbReference type="EC" id="3.1.4.37"/>
    </reaction>
</comment>
<comment type="subcellular location">
    <subcellularLocation>
        <location evidence="1">Golgi apparatus</location>
    </subcellularLocation>
</comment>
<comment type="similarity">
    <text evidence="2">Belongs to the 2H phosphoesterase superfamily. CPD1 family.</text>
</comment>
<accession>Q7S724</accession>
<accession>V5IKP0</accession>
<evidence type="ECO:0000250" key="1"/>
<evidence type="ECO:0000305" key="2"/>
<organism>
    <name type="scientific">Neurospora crassa (strain ATCC 24698 / 74-OR23-1A / CBS 708.71 / DSM 1257 / FGSC 987)</name>
    <dbReference type="NCBI Taxonomy" id="367110"/>
    <lineage>
        <taxon>Eukaryota</taxon>
        <taxon>Fungi</taxon>
        <taxon>Dikarya</taxon>
        <taxon>Ascomycota</taxon>
        <taxon>Pezizomycotina</taxon>
        <taxon>Sordariomycetes</taxon>
        <taxon>Sordariomycetidae</taxon>
        <taxon>Sordariales</taxon>
        <taxon>Sordariaceae</taxon>
        <taxon>Neurospora</taxon>
    </lineage>
</organism>
<dbReference type="EC" id="3.1.4.37"/>
<dbReference type="EMBL" id="CM002241">
    <property type="protein sequence ID" value="ESA42188.1"/>
    <property type="molecule type" value="Genomic_DNA"/>
</dbReference>
<dbReference type="EMBL" id="CM002241">
    <property type="protein sequence ID" value="ESA42189.1"/>
    <property type="molecule type" value="Genomic_DNA"/>
</dbReference>
<dbReference type="RefSeq" id="XP_011394956.1">
    <property type="nucleotide sequence ID" value="XM_011396654.1"/>
</dbReference>
<dbReference type="RefSeq" id="XP_011394957.1">
    <property type="nucleotide sequence ID" value="XM_011396655.1"/>
</dbReference>
<dbReference type="SMR" id="Q7S724"/>
<dbReference type="STRING" id="367110.Q7S724"/>
<dbReference type="PaxDb" id="5141-EFNCRP00000005508"/>
<dbReference type="EnsemblFungi" id="ESA42188">
    <property type="protein sequence ID" value="ESA42188"/>
    <property type="gene ID" value="NCU05539"/>
</dbReference>
<dbReference type="EnsemblFungi" id="ESA42189">
    <property type="protein sequence ID" value="ESA42189"/>
    <property type="gene ID" value="NCU05539"/>
</dbReference>
<dbReference type="GeneID" id="3876648"/>
<dbReference type="KEGG" id="ncr:NCU05539"/>
<dbReference type="VEuPathDB" id="FungiDB:NCU05539"/>
<dbReference type="HOGENOM" id="CLU_108991_1_0_1"/>
<dbReference type="InParanoid" id="Q7S724"/>
<dbReference type="OrthoDB" id="414322at2759"/>
<dbReference type="Proteomes" id="UP000001805">
    <property type="component" value="Chromosome 5, Linkage Group VI"/>
</dbReference>
<dbReference type="GO" id="GO:0005794">
    <property type="term" value="C:Golgi apparatus"/>
    <property type="evidence" value="ECO:0007669"/>
    <property type="project" value="UniProtKB-SubCell"/>
</dbReference>
<dbReference type="GO" id="GO:0004113">
    <property type="term" value="F:2',3'-cyclic-nucleotide 3'-phosphodiesterase activity"/>
    <property type="evidence" value="ECO:0000318"/>
    <property type="project" value="GO_Central"/>
</dbReference>
<dbReference type="GO" id="GO:0009187">
    <property type="term" value="P:cyclic nucleotide metabolic process"/>
    <property type="evidence" value="ECO:0000318"/>
    <property type="project" value="GO_Central"/>
</dbReference>
<dbReference type="FunFam" id="3.90.1140.10:FF:000016">
    <property type="entry name" value="WGS project CABT00000000 data, contig 2.10"/>
    <property type="match status" value="1"/>
</dbReference>
<dbReference type="Gene3D" id="3.90.1140.10">
    <property type="entry name" value="Cyclic phosphodiesterase"/>
    <property type="match status" value="1"/>
</dbReference>
<dbReference type="InterPro" id="IPR012386">
    <property type="entry name" value="Cyclic-nucl_3Pdiesterase"/>
</dbReference>
<dbReference type="InterPro" id="IPR009097">
    <property type="entry name" value="Cyclic_Pdiesterase"/>
</dbReference>
<dbReference type="PANTHER" id="PTHR28141">
    <property type="entry name" value="2',3'-CYCLIC-NUCLEOTIDE 3'-PHOSPHODIESTERASE"/>
    <property type="match status" value="1"/>
</dbReference>
<dbReference type="PANTHER" id="PTHR28141:SF1">
    <property type="entry name" value="2',3'-CYCLIC-NUCLEOTIDE 3'-PHOSPHODIESTERASE"/>
    <property type="match status" value="1"/>
</dbReference>
<dbReference type="Pfam" id="PF07823">
    <property type="entry name" value="CPDase"/>
    <property type="match status" value="1"/>
</dbReference>
<dbReference type="SUPFAM" id="SSF55144">
    <property type="entry name" value="LigT-like"/>
    <property type="match status" value="1"/>
</dbReference>